<reference key="1">
    <citation type="journal article" date="2014" name="J. Am. Chem. Soc.">
        <title>Complete biosynthetic pathway of anditomin: nature's sophisticated synthetic route to a complex fungal meroterpenoid.</title>
        <authorList>
            <person name="Matsuda Y."/>
            <person name="Wakimoto T."/>
            <person name="Mori T."/>
            <person name="Awakawa T."/>
            <person name="Abe I."/>
        </authorList>
    </citation>
    <scope>NUCLEOTIDE SEQUENCE [GENOMIC DNA]</scope>
    <scope>FUNCTION</scope>
    <scope>CATALYTIC ACTIVITY</scope>
    <scope>DISRUPTION PHENOTYPE</scope>
    <source>
        <strain>ATCC 12069 / CBS 136.55 / IMI 60316 / NBRC 32302</strain>
    </source>
</reference>
<accession>A0A097ZPG2</accession>
<evidence type="ECO:0000250" key="1">
    <source>
        <dbReference type="UniProtKB" id="H3JQW0"/>
    </source>
</evidence>
<evidence type="ECO:0000269" key="2">
    <source>
    </source>
</evidence>
<evidence type="ECO:0000303" key="3">
    <source>
    </source>
</evidence>
<evidence type="ECO:0000305" key="4"/>
<evidence type="ECO:0000305" key="5">
    <source>
    </source>
</evidence>
<organism>
    <name type="scientific">Emericella variicolor</name>
    <name type="common">Aspergillus stellatus</name>
    <dbReference type="NCBI Taxonomy" id="1549217"/>
    <lineage>
        <taxon>Eukaryota</taxon>
        <taxon>Fungi</taxon>
        <taxon>Dikarya</taxon>
        <taxon>Ascomycota</taxon>
        <taxon>Pezizomycotina</taxon>
        <taxon>Eurotiomycetes</taxon>
        <taxon>Eurotiomycetidae</taxon>
        <taxon>Eurotiales</taxon>
        <taxon>Aspergillaceae</taxon>
        <taxon>Aspergillus</taxon>
        <taxon>Aspergillus subgen. Nidulantes</taxon>
    </lineage>
</organism>
<comment type="function">
    <text evidence="2">FAD-binding monooxygenase; part of the gene cluster that mediates the biosynthesis of anditomin, a fungal meroterpenoid (PubMed:25216349). The first step of the pathway is the synthesis of 3,5-dimethylorsellinic acid (DMOA) by the polyketide synthase andM (PubMed:25216349). DMOA is then converted to the phthalide compound 5,7-dihydroxy-4,6-dimethylphthalide (DHDMP) by the cytochrome P450 monooxygenase andK, which is further prenylated by the prenyltransferase andD to yield farnesyl-DHDMP (PubMed:25216349). Further epoxidation by the FAD-dependent monooxygenase andE leads to epoxyfarnesyl-DHDMP (PubMed:25216349). The next step involves the terpene cyclase andB that converts epoxyfarnesyl-DHDMP into preandiloid A through opening of the epoxide ring followed by the cyclization of the farnesyl moiety (PubMed:25216349). Preandiloid A is in turn oxidized at the C-3 hydroxyl group to yield preandiloid B by the dehydrogenase andC (PubMed:25216349). The dioxygenase andA is solely responsible for the dehydrogenation of preandiloid B leading to the enone preandiloid C, as well as for the intriguing structural rearrangement to generate the bicyclo[2.2.2]octane core, transforming preandiloid C into andiconin (PubMed:25216349). FAD-binding monooxygenase andJ then produces andilesin D which is reduced by dehydrogenase andI to yield andilesin A (PubMed:25216349). Action of acetyltransferase andG followed by a spontaneous acetate elimination leads then to andilesin B, which is in turn substrate of the short chain dehydrogenase andH to yield andilesin C (PubMed:25216349). Finally, the dioxygenase andF catalyzes the transformation of andilesin C to anditomin (PubMed:25216349).</text>
</comment>
<comment type="cofactor">
    <cofactor evidence="1">
        <name>FAD</name>
        <dbReference type="ChEBI" id="CHEBI:57692"/>
    </cofactor>
    <text evidence="1">Binds 1 FAD per subunit.</text>
</comment>
<comment type="pathway">
    <text evidence="2">Secondary metabolite biosynthesis; terpenoid biosynthesis.</text>
</comment>
<comment type="disruption phenotype">
    <text evidence="2">Impairs the synthesis of anditomin but accumulates andiconin (PubMed:25216349).</text>
</comment>
<comment type="similarity">
    <text evidence="4">Belongs to the FAD-binding monooxygenase family.</text>
</comment>
<gene>
    <name evidence="3" type="primary">andJ</name>
</gene>
<feature type="chain" id="PRO_0000436586" description="FAD-binding monooxygenase andJ">
    <location>
        <begin position="1"/>
        <end position="633"/>
    </location>
</feature>
<feature type="binding site" evidence="1">
    <location>
        <begin position="117"/>
        <end position="120"/>
    </location>
    <ligand>
        <name>FAD</name>
        <dbReference type="ChEBI" id="CHEBI:57692"/>
    </ligand>
</feature>
<feature type="binding site" evidence="1">
    <location>
        <begin position="127"/>
        <end position="129"/>
    </location>
    <ligand>
        <name>NADP(+)</name>
        <dbReference type="ChEBI" id="CHEBI:58349"/>
    </ligand>
</feature>
<feature type="binding site" evidence="1">
    <location>
        <begin position="129"/>
        <end position="130"/>
    </location>
    <ligand>
        <name>FAD</name>
        <dbReference type="ChEBI" id="CHEBI:57692"/>
    </ligand>
</feature>
<feature type="binding site" evidence="1">
    <location>
        <position position="135"/>
    </location>
    <ligand>
        <name>FAD</name>
        <dbReference type="ChEBI" id="CHEBI:57692"/>
    </ligand>
</feature>
<feature type="binding site" evidence="1">
    <location>
        <begin position="269"/>
        <end position="275"/>
    </location>
    <ligand>
        <name>NADP(+)</name>
        <dbReference type="ChEBI" id="CHEBI:58349"/>
    </ligand>
</feature>
<feature type="binding site" evidence="1">
    <location>
        <begin position="292"/>
        <end position="293"/>
    </location>
    <ligand>
        <name>NADP(+)</name>
        <dbReference type="ChEBI" id="CHEBI:58349"/>
    </ligand>
</feature>
<feature type="site" description="Transition state stabilizer" evidence="1">
    <location>
        <position position="409"/>
    </location>
</feature>
<dbReference type="EC" id="1.14.13.-" evidence="5"/>
<dbReference type="EMBL" id="AB981314">
    <property type="protein sequence ID" value="BAP81864.1"/>
    <property type="molecule type" value="Genomic_DNA"/>
</dbReference>
<dbReference type="SMR" id="A0A097ZPG2"/>
<dbReference type="BioCyc" id="MetaCyc:MONOMER-19049"/>
<dbReference type="UniPathway" id="UPA00213"/>
<dbReference type="GO" id="GO:0050660">
    <property type="term" value="F:flavin adenine dinucleotide binding"/>
    <property type="evidence" value="ECO:0007669"/>
    <property type="project" value="InterPro"/>
</dbReference>
<dbReference type="GO" id="GO:0004499">
    <property type="term" value="F:N,N-dimethylaniline monooxygenase activity"/>
    <property type="evidence" value="ECO:0007669"/>
    <property type="project" value="InterPro"/>
</dbReference>
<dbReference type="GO" id="GO:0050661">
    <property type="term" value="F:NADP binding"/>
    <property type="evidence" value="ECO:0007669"/>
    <property type="project" value="InterPro"/>
</dbReference>
<dbReference type="GO" id="GO:0016114">
    <property type="term" value="P:terpenoid biosynthetic process"/>
    <property type="evidence" value="ECO:0007669"/>
    <property type="project" value="UniProtKB-UniPathway"/>
</dbReference>
<dbReference type="Gene3D" id="3.50.50.60">
    <property type="entry name" value="FAD/NAD(P)-binding domain"/>
    <property type="match status" value="3"/>
</dbReference>
<dbReference type="InterPro" id="IPR050775">
    <property type="entry name" value="FAD-binding_Monooxygenases"/>
</dbReference>
<dbReference type="InterPro" id="IPR036188">
    <property type="entry name" value="FAD/NAD-bd_sf"/>
</dbReference>
<dbReference type="InterPro" id="IPR020946">
    <property type="entry name" value="Flavin_mOase-like"/>
</dbReference>
<dbReference type="PANTHER" id="PTHR43098:SF2">
    <property type="entry name" value="FAD-BINDING MONOOXYGENASE AUSB-RELATED"/>
    <property type="match status" value="1"/>
</dbReference>
<dbReference type="PANTHER" id="PTHR43098">
    <property type="entry name" value="L-ORNITHINE N(5)-MONOOXYGENASE-RELATED"/>
    <property type="match status" value="1"/>
</dbReference>
<dbReference type="Pfam" id="PF00743">
    <property type="entry name" value="FMO-like"/>
    <property type="match status" value="1"/>
</dbReference>
<dbReference type="Pfam" id="PF13450">
    <property type="entry name" value="NAD_binding_8"/>
    <property type="match status" value="1"/>
</dbReference>
<dbReference type="SUPFAM" id="SSF51905">
    <property type="entry name" value="FAD/NAD(P)-binding domain"/>
    <property type="match status" value="1"/>
</dbReference>
<proteinExistence type="evidence at protein level"/>
<sequence length="633" mass="70274">MAPAIQANSNGTMNVNGKCRDGHTAEQRNVMDDALPIEITVEERGKAFAKDPWAHEYSVSEQALRDQERLIDQYHHKVLIVGAGHGGLLFAVRLLQTGNFGINDILIVDEAAGFGGTWYWNRYPGLMCDTESYIYMPLLEETGYMPREKYASGPELRANAERISHLWGLKRRALFRTAIKALDWNDAQGQWKATAQGLGKLQQVKLSADFAIIATGLYASPRIPDFPGLWNYKGPVFHPARWDYSVTGGTPERPEMTRLHNKRVAIVGTGASAVQIVPQLARHSKHLMVFQRTPSGVDQRDNCYTDKARWKEIASTKGWQRQRMENFNAFIGDPKSAPAVNMVGDRWTSMPSYSMTIGANGITKPGYQDEMREMDSIRQGKIRSRVHAIVHNPARADILSPNYPGWCKRPCFHDDYLAAFNEPNVDLVDLQGKGSISFTATGLAVADTQYEADVVIVSTGYTSPKDRSSPGSRANIAITGRGGLEMERKWESGLSTLHGVMTRDFPNLFFPGPAQSGVCTNQTYTLDQLARHVAYIMARGIQQCNGQAMVVEPSEEAERAWADQVVQRAGDSLTAFAACTSTSLFSAAKMTKDQIMNAARLTTWREGIASYVIELEAWRSEGTLQGLEIKRLA</sequence>
<name>ANDJ_EMEVA</name>
<protein>
    <recommendedName>
        <fullName evidence="3">FAD-binding monooxygenase andJ</fullName>
        <ecNumber evidence="5">1.14.13.-</ecNumber>
    </recommendedName>
    <alternativeName>
        <fullName evidence="3">Anditomin synthesis protein J</fullName>
    </alternativeName>
</protein>
<keyword id="KW-0274">FAD</keyword>
<keyword id="KW-0285">Flavoprotein</keyword>
<keyword id="KW-0521">NADP</keyword>
<keyword id="KW-0560">Oxidoreductase</keyword>